<name>RPOB_RHOPS</name>
<sequence length="1374" mass="153491">MAQQTFTGRKRVRKFFGHIREVAEMPNLIEVQKASYDQFLMVAEPPGGRDDEGLQAVFRSVFPISDFSNASMLEFVRYEFEPPKYDVDECRQRGMTYAAPLKVTLRLIVFDIDEETGARSVKDIKEQDVYMGDIPLMTMNGTFVVNGTERVIVSQMHRSPGVFFDHDKGKTHSSGKLLFAARVIPYRGSWLDIEFDAKDIVFARIDRRRKIPVTSLMFALGLDGEEILSTFYKKILYKRIKEGWRVPFDANRFRGYSTVNDLIDADTGKVVLEAGKKLTVRAARQLQEKGLKALRLSDEELVGNYLAEDLVNPKTGEIYAEAGEEITEKSLKALNEEGYKELPLLDIDHVNIGPYIRNTLSADKNMTREDALFDIYRVMRPGEPPTLDSAQNMFQSLFFDSERYDLSAVGRVKMNMRLDLDAPDTHRTLRKEDILAVIKTLVGLRDGKGEIDDIDHLGNRRVRSVGELMENQYRIGLLRMERAIKERMSSVDIDTVMPQDLINAKPAAAAVREFFGSSQLSQFMDQTNPLSEITHKRRLSALGPGGLTRERAGFEVRDVHPTHYGRICPIETPEGPNIGLINSLATFARVNKYGFVETPYRKVKEGRVTDEVVYLSAMEEGRYAVAQANISLDAKGRFTDDLIVCRAGGTRDVVLIPADQVDYMDVSPKQLVSVAAALIPFLENDDANRALMGSNMQRQAVPLVRAEAPFVGTGMEGVVARDSGAAIAARRTGVIDQIDATRIVIRATEDLDPTKSGVDIYRLMKYQRSNQSTCINQRPLVKVGDSVAKGDIIADGPSTDLGELALGRNVLVAFMPWNGYNFEDSILLSERIVKEDVFTSIHIEEFEVMARDTKLGPEEITRDIPNVSEEALKNLDEAGIVYIGAEVRAGDILVGKITPKGESPMTPEEKLLRAIFGEKASDVRDTSLRVPPGVQGTIVEVRVFNRHGVDKDERALAIEREEIERLAKDRDDEQAILDRNVYGRLADLLDNRQGVSGPKGFKKDTKITRAVLEEYPKSQWWLFAAPNDKLMAEIEAMRKQYDESKKGLEQRFLDKVEKLQRGDELPPGVMKMVKVFVAVKRKIQPGDKMAGRHGNKGVVSKIVPIEDMPFLEDGTHADIVLNPLGVPSRMNVGQILETHLGWACAGMGKKIGQTIDAYYQRQDLKPLRETLKKIYGDDETIKSLNDGELIELGRNLSHGVPIATPVFDGAKEADIEEMLKLAGFDASGQSTVYDGRTGDEFDRKVTVGYIYMLKLHHLVDDKIHARSIGPYSLVTQQPLGGKAQFGGQRFGEMEVWALEAYGAAYTLQEMLTVKSDDVAGRTKVYEAIVRGDDTFEAGIPESFNVLVKEMRSLGLNVDLHNSKLGVPPPAEAAE</sequence>
<organism>
    <name type="scientific">Rhodopseudomonas palustris (strain BisB5)</name>
    <dbReference type="NCBI Taxonomy" id="316057"/>
    <lineage>
        <taxon>Bacteria</taxon>
        <taxon>Pseudomonadati</taxon>
        <taxon>Pseudomonadota</taxon>
        <taxon>Alphaproteobacteria</taxon>
        <taxon>Hyphomicrobiales</taxon>
        <taxon>Nitrobacteraceae</taxon>
        <taxon>Rhodopseudomonas</taxon>
    </lineage>
</organism>
<feature type="chain" id="PRO_0000300389" description="DNA-directed RNA polymerase subunit beta">
    <location>
        <begin position="1"/>
        <end position="1374"/>
    </location>
</feature>
<gene>
    <name evidence="1" type="primary">rpoB</name>
    <name type="ordered locus">RPD_3195</name>
</gene>
<proteinExistence type="inferred from homology"/>
<protein>
    <recommendedName>
        <fullName evidence="1">DNA-directed RNA polymerase subunit beta</fullName>
        <shortName evidence="1">RNAP subunit beta</shortName>
        <ecNumber evidence="1">2.7.7.6</ecNumber>
    </recommendedName>
    <alternativeName>
        <fullName evidence="1">RNA polymerase subunit beta</fullName>
    </alternativeName>
    <alternativeName>
        <fullName evidence="1">Transcriptase subunit beta</fullName>
    </alternativeName>
</protein>
<reference key="1">
    <citation type="submission" date="2006-03" db="EMBL/GenBank/DDBJ databases">
        <title>Complete sequence of Rhodopseudomonas palustris BisB5.</title>
        <authorList>
            <consortium name="US DOE Joint Genome Institute"/>
            <person name="Copeland A."/>
            <person name="Lucas S."/>
            <person name="Lapidus A."/>
            <person name="Barry K."/>
            <person name="Detter J.C."/>
            <person name="Glavina del Rio T."/>
            <person name="Hammon N."/>
            <person name="Israni S."/>
            <person name="Dalin E."/>
            <person name="Tice H."/>
            <person name="Pitluck S."/>
            <person name="Chain P."/>
            <person name="Malfatti S."/>
            <person name="Shin M."/>
            <person name="Vergez L."/>
            <person name="Schmutz J."/>
            <person name="Larimer F."/>
            <person name="Land M."/>
            <person name="Hauser L."/>
            <person name="Pelletier D.A."/>
            <person name="Kyrpides N."/>
            <person name="Lykidis A."/>
            <person name="Oda Y."/>
            <person name="Harwood C.S."/>
            <person name="Richardson P."/>
        </authorList>
    </citation>
    <scope>NUCLEOTIDE SEQUENCE [LARGE SCALE GENOMIC DNA]</scope>
    <source>
        <strain>BisB5</strain>
    </source>
</reference>
<comment type="function">
    <text evidence="1">DNA-dependent RNA polymerase catalyzes the transcription of DNA into RNA using the four ribonucleoside triphosphates as substrates.</text>
</comment>
<comment type="catalytic activity">
    <reaction evidence="1">
        <text>RNA(n) + a ribonucleoside 5'-triphosphate = RNA(n+1) + diphosphate</text>
        <dbReference type="Rhea" id="RHEA:21248"/>
        <dbReference type="Rhea" id="RHEA-COMP:14527"/>
        <dbReference type="Rhea" id="RHEA-COMP:17342"/>
        <dbReference type="ChEBI" id="CHEBI:33019"/>
        <dbReference type="ChEBI" id="CHEBI:61557"/>
        <dbReference type="ChEBI" id="CHEBI:140395"/>
        <dbReference type="EC" id="2.7.7.6"/>
    </reaction>
</comment>
<comment type="subunit">
    <text evidence="1">The RNAP catalytic core consists of 2 alpha, 1 beta, 1 beta' and 1 omega subunit. When a sigma factor is associated with the core the holoenzyme is formed, which can initiate transcription.</text>
</comment>
<comment type="similarity">
    <text evidence="1">Belongs to the RNA polymerase beta chain family.</text>
</comment>
<keyword id="KW-0240">DNA-directed RNA polymerase</keyword>
<keyword id="KW-0548">Nucleotidyltransferase</keyword>
<keyword id="KW-0804">Transcription</keyword>
<keyword id="KW-0808">Transferase</keyword>
<evidence type="ECO:0000255" key="1">
    <source>
        <dbReference type="HAMAP-Rule" id="MF_01321"/>
    </source>
</evidence>
<accession>Q134R8</accession>
<dbReference type="EC" id="2.7.7.6" evidence="1"/>
<dbReference type="EMBL" id="CP000283">
    <property type="protein sequence ID" value="ABE40421.1"/>
    <property type="molecule type" value="Genomic_DNA"/>
</dbReference>
<dbReference type="SMR" id="Q134R8"/>
<dbReference type="STRING" id="316057.RPD_3195"/>
<dbReference type="KEGG" id="rpd:RPD_3195"/>
<dbReference type="eggNOG" id="COG0085">
    <property type="taxonomic scope" value="Bacteria"/>
</dbReference>
<dbReference type="HOGENOM" id="CLU_000524_4_0_5"/>
<dbReference type="BioCyc" id="RPAL316057:RPD_RS16040-MONOMER"/>
<dbReference type="Proteomes" id="UP000001818">
    <property type="component" value="Chromosome"/>
</dbReference>
<dbReference type="GO" id="GO:0000428">
    <property type="term" value="C:DNA-directed RNA polymerase complex"/>
    <property type="evidence" value="ECO:0007669"/>
    <property type="project" value="UniProtKB-KW"/>
</dbReference>
<dbReference type="GO" id="GO:0003677">
    <property type="term" value="F:DNA binding"/>
    <property type="evidence" value="ECO:0007669"/>
    <property type="project" value="UniProtKB-UniRule"/>
</dbReference>
<dbReference type="GO" id="GO:0003899">
    <property type="term" value="F:DNA-directed RNA polymerase activity"/>
    <property type="evidence" value="ECO:0007669"/>
    <property type="project" value="UniProtKB-UniRule"/>
</dbReference>
<dbReference type="GO" id="GO:0032549">
    <property type="term" value="F:ribonucleoside binding"/>
    <property type="evidence" value="ECO:0007669"/>
    <property type="project" value="InterPro"/>
</dbReference>
<dbReference type="GO" id="GO:0006351">
    <property type="term" value="P:DNA-templated transcription"/>
    <property type="evidence" value="ECO:0007669"/>
    <property type="project" value="UniProtKB-UniRule"/>
</dbReference>
<dbReference type="CDD" id="cd00653">
    <property type="entry name" value="RNA_pol_B_RPB2"/>
    <property type="match status" value="1"/>
</dbReference>
<dbReference type="FunFam" id="2.40.50.100:FF:000006">
    <property type="entry name" value="DNA-directed RNA polymerase subunit beta"/>
    <property type="match status" value="1"/>
</dbReference>
<dbReference type="FunFam" id="3.90.1800.10:FF:000001">
    <property type="entry name" value="DNA-directed RNA polymerase subunit beta"/>
    <property type="match status" value="1"/>
</dbReference>
<dbReference type="Gene3D" id="2.40.50.100">
    <property type="match status" value="1"/>
</dbReference>
<dbReference type="Gene3D" id="2.40.50.150">
    <property type="match status" value="1"/>
</dbReference>
<dbReference type="Gene3D" id="3.90.1100.10">
    <property type="match status" value="2"/>
</dbReference>
<dbReference type="Gene3D" id="2.30.150.10">
    <property type="entry name" value="DNA-directed RNA polymerase, beta subunit, external 1 domain"/>
    <property type="match status" value="1"/>
</dbReference>
<dbReference type="Gene3D" id="2.40.270.10">
    <property type="entry name" value="DNA-directed RNA polymerase, subunit 2, domain 6"/>
    <property type="match status" value="2"/>
</dbReference>
<dbReference type="Gene3D" id="3.90.1800.10">
    <property type="entry name" value="RNA polymerase alpha subunit dimerisation domain"/>
    <property type="match status" value="1"/>
</dbReference>
<dbReference type="Gene3D" id="3.90.1110.10">
    <property type="entry name" value="RNA polymerase Rpb2, domain 2"/>
    <property type="match status" value="2"/>
</dbReference>
<dbReference type="HAMAP" id="MF_01321">
    <property type="entry name" value="RNApol_bact_RpoB"/>
    <property type="match status" value="1"/>
</dbReference>
<dbReference type="InterPro" id="IPR042107">
    <property type="entry name" value="DNA-dir_RNA_pol_bsu_ext_1_sf"/>
</dbReference>
<dbReference type="InterPro" id="IPR019462">
    <property type="entry name" value="DNA-dir_RNA_pol_bsu_external_1"/>
</dbReference>
<dbReference type="InterPro" id="IPR015712">
    <property type="entry name" value="DNA-dir_RNA_pol_su2"/>
</dbReference>
<dbReference type="InterPro" id="IPR007120">
    <property type="entry name" value="DNA-dir_RNAP_su2_dom"/>
</dbReference>
<dbReference type="InterPro" id="IPR037033">
    <property type="entry name" value="DNA-dir_RNAP_su2_hyb_sf"/>
</dbReference>
<dbReference type="InterPro" id="IPR010243">
    <property type="entry name" value="RNA_pol_bsu_bac"/>
</dbReference>
<dbReference type="InterPro" id="IPR007121">
    <property type="entry name" value="RNA_pol_bsu_CS"/>
</dbReference>
<dbReference type="InterPro" id="IPR007644">
    <property type="entry name" value="RNA_pol_bsu_protrusion"/>
</dbReference>
<dbReference type="InterPro" id="IPR007642">
    <property type="entry name" value="RNA_pol_Rpb2_2"/>
</dbReference>
<dbReference type="InterPro" id="IPR037034">
    <property type="entry name" value="RNA_pol_Rpb2_2_sf"/>
</dbReference>
<dbReference type="InterPro" id="IPR007645">
    <property type="entry name" value="RNA_pol_Rpb2_3"/>
</dbReference>
<dbReference type="InterPro" id="IPR007641">
    <property type="entry name" value="RNA_pol_Rpb2_7"/>
</dbReference>
<dbReference type="InterPro" id="IPR014724">
    <property type="entry name" value="RNA_pol_RPB2_OB-fold"/>
</dbReference>
<dbReference type="NCBIfam" id="NF001616">
    <property type="entry name" value="PRK00405.1"/>
    <property type="match status" value="1"/>
</dbReference>
<dbReference type="NCBIfam" id="TIGR02013">
    <property type="entry name" value="rpoB"/>
    <property type="match status" value="1"/>
</dbReference>
<dbReference type="PANTHER" id="PTHR20856">
    <property type="entry name" value="DNA-DIRECTED RNA POLYMERASE I SUBUNIT 2"/>
    <property type="match status" value="1"/>
</dbReference>
<dbReference type="Pfam" id="PF04563">
    <property type="entry name" value="RNA_pol_Rpb2_1"/>
    <property type="match status" value="1"/>
</dbReference>
<dbReference type="Pfam" id="PF04561">
    <property type="entry name" value="RNA_pol_Rpb2_2"/>
    <property type="match status" value="2"/>
</dbReference>
<dbReference type="Pfam" id="PF04565">
    <property type="entry name" value="RNA_pol_Rpb2_3"/>
    <property type="match status" value="1"/>
</dbReference>
<dbReference type="Pfam" id="PF10385">
    <property type="entry name" value="RNA_pol_Rpb2_45"/>
    <property type="match status" value="1"/>
</dbReference>
<dbReference type="Pfam" id="PF00562">
    <property type="entry name" value="RNA_pol_Rpb2_6"/>
    <property type="match status" value="1"/>
</dbReference>
<dbReference type="Pfam" id="PF04560">
    <property type="entry name" value="RNA_pol_Rpb2_7"/>
    <property type="match status" value="1"/>
</dbReference>
<dbReference type="SUPFAM" id="SSF64484">
    <property type="entry name" value="beta and beta-prime subunits of DNA dependent RNA-polymerase"/>
    <property type="match status" value="1"/>
</dbReference>
<dbReference type="PROSITE" id="PS01166">
    <property type="entry name" value="RNA_POL_BETA"/>
    <property type="match status" value="1"/>
</dbReference>